<accession>P52296</accession>
<reference key="1">
    <citation type="journal article" date="1995" name="Proc. Natl. Acad. Sci. U.S.A.">
        <title>Identification of a protein complex that is required for nuclear protein import and mediates docking of import substrate to distinct nucleoporins.</title>
        <authorList>
            <person name="Radu A."/>
            <person name="Blobel G."/>
            <person name="Moore M.M."/>
        </authorList>
    </citation>
    <scope>NUCLEOTIDE SEQUENCE [MRNA]</scope>
    <scope>PARTIAL PROTEIN SEQUENCE</scope>
    <source>
        <strain>Buffalo</strain>
        <tissue>Liver</tissue>
    </source>
</reference>
<reference key="2">
    <citation type="journal article" date="1995" name="Proc. Natl. Acad. Sci. U.S.A.">
        <title>Mammalian karyopherin alpha 1 beta and alpha 2 beta heterodimers: alpha 1 or alpha 2 subunit binds nuclear localization signal and beta subunit interacts with peptide repeat-containing nucleoporins.</title>
        <authorList>
            <person name="Moroianu J."/>
            <person name="Hijikata M."/>
            <person name="Blobel G."/>
            <person name="Radu A."/>
        </authorList>
    </citation>
    <scope>SUBCELLULAR LOCATION</scope>
    <scope>BINDING TO NUCLEOPORINS</scope>
</reference>
<comment type="function">
    <text evidence="3">Functions in nuclear protein import, either in association with an adapter protein, like an importin-alpha subunit, which binds to nuclear localization signals (NLS) in cargo substrates, or by acting as autonomous nuclear transport receptor. Acting autonomously, serves itself as NLS receptor. Docking of the importin/substrate complex to the nuclear pore complex (NPC) is mediated by KPNB1 through binding to nucleoporin FxFG repeats and the complex is subsequently translocated through the pore by an energy requiring, Ran-dependent mechanism. At the nucleoplasmic side of the NPC, Ran binds to importin-beta and the three components separate and importin-alpha and -beta are re-exported from the nucleus to the cytoplasm where GTP hydrolysis releases Ran from importin. The directionality of nuclear import is thought to be conferred by an asymmetric distribution of the GTP- and GDP-bound forms of Ran between the cytoplasm and nucleus. Mediates autonomously the nuclear import of ribosomal proteins RPL23A, RPS7 and RPL5. In association with IPO7, mediates the nuclear import of H1 histone. In vitro, mediates nuclear import of H2A, H2B, H3 and H4 histones. Imports MRTFA, SNAI1 and PRKCI into the nucleus.</text>
</comment>
<comment type="subunit">
    <text evidence="2 3">Forms a complex with an importin alpha subunit (By similarity). Interacts with XPO1 (By similarity). Forms a heterodimer with IPO7 (By similarity). The KPNB1/IPO7 heterodimer interacts with H1 histone (By similarity). Interacts with SNUPN (By similarity). Interacts with H2A, H2B, H3 and H4 histones (By similarity). Component of an import snRNP complex composed of KPNB1, SNUPN, SMN1 and ZNF259 (By similarity). Component of a nuclear export receptor complex composed of KPNB1, Ran, SNUPN and XPO1 (By similarity). Interacts with SRY (By similarity). Interacts with PRKCI/atypical protein kinase C iota (By similarity). Interacts with KPNA2 (By similarity). Interacts with KPNA7 (By similarity). Interacts with SNAI1 (via zinc fingers) and SNAI2 (via zinc fingers) (By similarity). Interacts with SLC35G1 and STIM1 (By similarity). Interacts with DCAF8 (By similarity). Interacts with RAN (By similarity). Interacts with NUMA1 (via C-terminus); this interaction is inhibited by RanGTP (By similarity). Interacts with ZBED1/hDREF; required for nuclear import of ZBED1/hDREF (By similarity). Interacts with SRP19 (By similarity). Interacts with RPL23A (via BIB domain), RPS7 and RPL5 (By similarity).</text>
</comment>
<comment type="subcellular location">
    <subcellularLocation>
        <location evidence="5">Cytoplasm</location>
    </subcellularLocation>
    <subcellularLocation>
        <location evidence="5">Nucleus envelope</location>
    </subcellularLocation>
</comment>
<comment type="PTM">
    <text evidence="3">Mono-ADP-ribosylated by PARP16.</text>
</comment>
<comment type="similarity">
    <text evidence="6">Belongs to the importin beta family. Importin beta-1 subfamily.</text>
</comment>
<feature type="chain" id="PRO_0000120747" description="Importin subunit beta-1">
    <location>
        <begin position="1"/>
        <end position="875"/>
    </location>
</feature>
<feature type="repeat" description="HEAT 1" evidence="3">
    <location>
        <begin position="2"/>
        <end position="31"/>
    </location>
</feature>
<feature type="domain" description="Importin N-terminal" evidence="4">
    <location>
        <begin position="21"/>
        <end position="100"/>
    </location>
</feature>
<feature type="repeat" description="HEAT 2" evidence="3">
    <location>
        <begin position="33"/>
        <end position="64"/>
    </location>
</feature>
<feature type="repeat" description="HEAT 3" evidence="3">
    <location>
        <begin position="84"/>
        <end position="122"/>
    </location>
</feature>
<feature type="repeat" description="HEAT 4" evidence="3">
    <location>
        <begin position="128"/>
        <end position="159"/>
    </location>
</feature>
<feature type="repeat" description="HEAT 5" evidence="3">
    <location>
        <begin position="169"/>
        <end position="201"/>
    </location>
</feature>
<feature type="repeat" description="HEAT 6" evidence="3">
    <location>
        <begin position="211"/>
        <end position="246"/>
    </location>
</feature>
<feature type="repeat" description="HEAT 7" evidence="3">
    <location>
        <begin position="252"/>
        <end position="301"/>
    </location>
</feature>
<feature type="repeat" description="HEAT 8" evidence="3">
    <location>
        <begin position="313"/>
        <end position="359"/>
    </location>
</feature>
<feature type="repeat" description="HEAT 9" evidence="3">
    <location>
        <begin position="363"/>
        <end position="393"/>
    </location>
</feature>
<feature type="repeat" description="HEAT 10" evidence="3">
    <location>
        <begin position="401"/>
        <end position="437"/>
    </location>
</feature>
<feature type="repeat" description="HEAT 11" evidence="3">
    <location>
        <begin position="448"/>
        <end position="484"/>
    </location>
</feature>
<feature type="repeat" description="HEAT 12" evidence="3">
    <location>
        <begin position="499"/>
        <end position="536"/>
    </location>
</feature>
<feature type="repeat" description="HEAT 13" evidence="3">
    <location>
        <begin position="543"/>
        <end position="591"/>
    </location>
</feature>
<feature type="repeat" description="HEAT 14" evidence="3">
    <location>
        <begin position="599"/>
        <end position="638"/>
    </location>
</feature>
<feature type="repeat" description="HEAT 15" evidence="3">
    <location>
        <begin position="643"/>
        <end position="680"/>
    </location>
</feature>
<feature type="repeat" description="HEAT 16" evidence="3">
    <location>
        <begin position="685"/>
        <end position="723"/>
    </location>
</feature>
<feature type="repeat" description="HEAT 17" evidence="3">
    <location>
        <begin position="731"/>
        <end position="775"/>
    </location>
</feature>
<feature type="repeat" description="HEAT 18" evidence="3">
    <location>
        <begin position="785"/>
        <end position="828"/>
    </location>
</feature>
<feature type="repeat" description="HEAT 19" evidence="3">
    <location>
        <begin position="830"/>
        <end position="872"/>
    </location>
</feature>
<feature type="region of interest" description="Essential for high affinity interaction with RPL23A" evidence="3">
    <location>
        <begin position="285"/>
        <end position="461"/>
    </location>
</feature>
<feature type="region of interest" description="IAB-binding">
    <location>
        <begin position="328"/>
        <end position="341"/>
    </location>
</feature>
<feature type="region of interest" description="Ran-GTP binding" evidence="1">
    <location>
        <begin position="333"/>
        <end position="418"/>
    </location>
</feature>
<feature type="modified residue" description="N-acetylmethionine" evidence="3">
    <location>
        <position position="1"/>
    </location>
</feature>
<feature type="modified residue" description="Phosphoserine" evidence="3">
    <location>
        <position position="12"/>
    </location>
</feature>
<feature type="modified residue" description="N6-acetyllysine" evidence="3">
    <location>
        <position position="210"/>
    </location>
</feature>
<feature type="modified residue" description="N6-acetyllysine" evidence="3">
    <location>
        <position position="834"/>
    </location>
</feature>
<feature type="modified residue" description="N6-acetyllysine" evidence="3">
    <location>
        <position position="866"/>
    </location>
</feature>
<gene>
    <name type="primary">Kpnb1</name>
</gene>
<proteinExistence type="evidence at protein level"/>
<evidence type="ECO:0000250" key="1"/>
<evidence type="ECO:0000250" key="2">
    <source>
        <dbReference type="UniProtKB" id="P70168"/>
    </source>
</evidence>
<evidence type="ECO:0000250" key="3">
    <source>
        <dbReference type="UniProtKB" id="Q14974"/>
    </source>
</evidence>
<evidence type="ECO:0000255" key="4">
    <source>
        <dbReference type="PROSITE-ProRule" id="PRU00115"/>
    </source>
</evidence>
<evidence type="ECO:0000269" key="5">
    <source>
    </source>
</evidence>
<evidence type="ECO:0000305" key="6"/>
<dbReference type="EMBL" id="L38644">
    <property type="protein sequence ID" value="AAC42047.1"/>
    <property type="molecule type" value="mRNA"/>
</dbReference>
<dbReference type="PIR" id="I59350">
    <property type="entry name" value="I59350"/>
</dbReference>
<dbReference type="RefSeq" id="NP_058759.1">
    <property type="nucleotide sequence ID" value="NM_017063.1"/>
</dbReference>
<dbReference type="SMR" id="P52296"/>
<dbReference type="BioGRID" id="247024">
    <property type="interactions" value="5"/>
</dbReference>
<dbReference type="CORUM" id="P52296"/>
<dbReference type="DIP" id="DIP-37024N"/>
<dbReference type="FunCoup" id="P52296">
    <property type="interactions" value="4289"/>
</dbReference>
<dbReference type="IntAct" id="P52296">
    <property type="interactions" value="6"/>
</dbReference>
<dbReference type="MINT" id="P52296"/>
<dbReference type="STRING" id="10116.ENSRNOP00000012376"/>
<dbReference type="iPTMnet" id="P52296"/>
<dbReference type="PhosphoSitePlus" id="P52296"/>
<dbReference type="jPOST" id="P52296"/>
<dbReference type="PaxDb" id="10116-ENSRNOP00000012376"/>
<dbReference type="PeptideAtlas" id="P52296"/>
<dbReference type="DNASU" id="24917"/>
<dbReference type="GeneID" id="24917"/>
<dbReference type="KEGG" id="rno:24917"/>
<dbReference type="UCSC" id="RGD:2909">
    <property type="organism name" value="rat"/>
</dbReference>
<dbReference type="AGR" id="RGD:2909"/>
<dbReference type="CTD" id="3837"/>
<dbReference type="RGD" id="2909">
    <property type="gene designation" value="Kpnb1"/>
</dbReference>
<dbReference type="eggNOG" id="KOG1241">
    <property type="taxonomic scope" value="Eukaryota"/>
</dbReference>
<dbReference type="InParanoid" id="P52296"/>
<dbReference type="PhylomeDB" id="P52296"/>
<dbReference type="Reactome" id="R-RNO-140342">
    <property type="pathway name" value="Apoptosis induced DNA fragmentation"/>
</dbReference>
<dbReference type="Reactome" id="R-RNO-1655829">
    <property type="pathway name" value="Regulation of cholesterol biosynthesis by SREBP (SREBF)"/>
</dbReference>
<dbReference type="Reactome" id="R-RNO-2995383">
    <property type="pathway name" value="Initiation of Nuclear Envelope (NE) Reformation"/>
</dbReference>
<dbReference type="Reactome" id="R-RNO-6798695">
    <property type="pathway name" value="Neutrophil degranulation"/>
</dbReference>
<dbReference type="Reactome" id="R-RNO-68616">
    <property type="pathway name" value="Assembly of the ORC complex at the origin of replication"/>
</dbReference>
<dbReference type="Reactome" id="R-RNO-909733">
    <property type="pathway name" value="Interferon alpha/beta signaling"/>
</dbReference>
<dbReference type="PRO" id="PR:P52296"/>
<dbReference type="Proteomes" id="UP000002494">
    <property type="component" value="Unplaced"/>
</dbReference>
<dbReference type="GO" id="GO:0005737">
    <property type="term" value="C:cytoplasm"/>
    <property type="evidence" value="ECO:0000266"/>
    <property type="project" value="RGD"/>
</dbReference>
<dbReference type="GO" id="GO:0010494">
    <property type="term" value="C:cytoplasmic stress granule"/>
    <property type="evidence" value="ECO:0000266"/>
    <property type="project" value="RGD"/>
</dbReference>
<dbReference type="GO" id="GO:0071782">
    <property type="term" value="C:endoplasmic reticulum tubular network"/>
    <property type="evidence" value="ECO:0000266"/>
    <property type="project" value="RGD"/>
</dbReference>
<dbReference type="GO" id="GO:0042564">
    <property type="term" value="C:NLS-dependent protein nuclear import complex"/>
    <property type="evidence" value="ECO:0000266"/>
    <property type="project" value="RGD"/>
</dbReference>
<dbReference type="GO" id="GO:0005635">
    <property type="term" value="C:nuclear envelope"/>
    <property type="evidence" value="ECO:0000266"/>
    <property type="project" value="RGD"/>
</dbReference>
<dbReference type="GO" id="GO:0005643">
    <property type="term" value="C:nuclear pore"/>
    <property type="evidence" value="ECO:0000314"/>
    <property type="project" value="RGD"/>
</dbReference>
<dbReference type="GO" id="GO:0005654">
    <property type="term" value="C:nucleoplasm"/>
    <property type="evidence" value="ECO:0000266"/>
    <property type="project" value="RGD"/>
</dbReference>
<dbReference type="GO" id="GO:0005634">
    <property type="term" value="C:nucleus"/>
    <property type="evidence" value="ECO:0000318"/>
    <property type="project" value="GO_Central"/>
</dbReference>
<dbReference type="GO" id="GO:0032991">
    <property type="term" value="C:protein-containing complex"/>
    <property type="evidence" value="ECO:0000266"/>
    <property type="project" value="RGD"/>
</dbReference>
<dbReference type="GO" id="GO:0019899">
    <property type="term" value="F:enzyme binding"/>
    <property type="evidence" value="ECO:0000266"/>
    <property type="project" value="RGD"/>
</dbReference>
<dbReference type="GO" id="GO:0051879">
    <property type="term" value="F:Hsp90 protein binding"/>
    <property type="evidence" value="ECO:0000266"/>
    <property type="project" value="RGD"/>
</dbReference>
<dbReference type="GO" id="GO:0061676">
    <property type="term" value="F:importin-alpha family protein binding"/>
    <property type="evidence" value="ECO:0000266"/>
    <property type="project" value="RGD"/>
</dbReference>
<dbReference type="GO" id="GO:0019894">
    <property type="term" value="F:kinesin binding"/>
    <property type="evidence" value="ECO:0000353"/>
    <property type="project" value="RGD"/>
</dbReference>
<dbReference type="GO" id="GO:0061608">
    <property type="term" value="F:nuclear import signal receptor activity"/>
    <property type="evidence" value="ECO:0000266"/>
    <property type="project" value="RGD"/>
</dbReference>
<dbReference type="GO" id="GO:0008139">
    <property type="term" value="F:nuclear localization sequence binding"/>
    <property type="evidence" value="ECO:0000318"/>
    <property type="project" value="GO_Central"/>
</dbReference>
<dbReference type="GO" id="GO:0019904">
    <property type="term" value="F:protein domain specific binding"/>
    <property type="evidence" value="ECO:0000266"/>
    <property type="project" value="RGD"/>
</dbReference>
<dbReference type="GO" id="GO:0044877">
    <property type="term" value="F:protein-containing complex binding"/>
    <property type="evidence" value="ECO:0000353"/>
    <property type="project" value="RGD"/>
</dbReference>
<dbReference type="GO" id="GO:0031267">
    <property type="term" value="F:small GTPase binding"/>
    <property type="evidence" value="ECO:0007669"/>
    <property type="project" value="InterPro"/>
</dbReference>
<dbReference type="GO" id="GO:0030953">
    <property type="term" value="P:astral microtubule organization"/>
    <property type="evidence" value="ECO:0000266"/>
    <property type="project" value="RGD"/>
</dbReference>
<dbReference type="GO" id="GO:0040001">
    <property type="term" value="P:establishment of mitotic spindle localization"/>
    <property type="evidence" value="ECO:0000266"/>
    <property type="project" value="RGD"/>
</dbReference>
<dbReference type="GO" id="GO:0007079">
    <property type="term" value="P:mitotic chromosome movement towards spindle pole"/>
    <property type="evidence" value="ECO:0000266"/>
    <property type="project" value="RGD"/>
</dbReference>
<dbReference type="GO" id="GO:0007080">
    <property type="term" value="P:mitotic metaphase chromosome alignment"/>
    <property type="evidence" value="ECO:0000266"/>
    <property type="project" value="RGD"/>
</dbReference>
<dbReference type="GO" id="GO:0090307">
    <property type="term" value="P:mitotic spindle assembly"/>
    <property type="evidence" value="ECO:0000266"/>
    <property type="project" value="RGD"/>
</dbReference>
<dbReference type="GO" id="GO:0006607">
    <property type="term" value="P:NLS-bearing protein import into nucleus"/>
    <property type="evidence" value="ECO:0000266"/>
    <property type="project" value="RGD"/>
</dbReference>
<dbReference type="GO" id="GO:0006606">
    <property type="term" value="P:protein import into nucleus"/>
    <property type="evidence" value="ECO:0000250"/>
    <property type="project" value="UniProtKB"/>
</dbReference>
<dbReference type="GO" id="GO:0006610">
    <property type="term" value="P:ribosomal protein import into nucleus"/>
    <property type="evidence" value="ECO:0000266"/>
    <property type="project" value="RGD"/>
</dbReference>
<dbReference type="GO" id="GO:0006404">
    <property type="term" value="P:RNA import into nucleus"/>
    <property type="evidence" value="ECO:0000266"/>
    <property type="project" value="RGD"/>
</dbReference>
<dbReference type="FunFam" id="1.25.10.10:FF:000027">
    <property type="entry name" value="Importin subunit beta-1"/>
    <property type="match status" value="1"/>
</dbReference>
<dbReference type="Gene3D" id="1.25.10.10">
    <property type="entry name" value="Leucine-rich Repeat Variant"/>
    <property type="match status" value="1"/>
</dbReference>
<dbReference type="InterPro" id="IPR011989">
    <property type="entry name" value="ARM-like"/>
</dbReference>
<dbReference type="InterPro" id="IPR016024">
    <property type="entry name" value="ARM-type_fold"/>
</dbReference>
<dbReference type="InterPro" id="IPR000225">
    <property type="entry name" value="Armadillo"/>
</dbReference>
<dbReference type="InterPro" id="IPR021133">
    <property type="entry name" value="HEAT_type_2"/>
</dbReference>
<dbReference type="InterPro" id="IPR001494">
    <property type="entry name" value="Importin-beta_N"/>
</dbReference>
<dbReference type="InterPro" id="IPR040122">
    <property type="entry name" value="Importin_beta"/>
</dbReference>
<dbReference type="PANTHER" id="PTHR10527">
    <property type="entry name" value="IMPORTIN BETA"/>
    <property type="match status" value="1"/>
</dbReference>
<dbReference type="Pfam" id="PF13513">
    <property type="entry name" value="HEAT_EZ"/>
    <property type="match status" value="1"/>
</dbReference>
<dbReference type="Pfam" id="PF03810">
    <property type="entry name" value="IBN_N"/>
    <property type="match status" value="1"/>
</dbReference>
<dbReference type="SMART" id="SM00185">
    <property type="entry name" value="ARM"/>
    <property type="match status" value="3"/>
</dbReference>
<dbReference type="SMART" id="SM00913">
    <property type="entry name" value="IBN_N"/>
    <property type="match status" value="1"/>
</dbReference>
<dbReference type="SUPFAM" id="SSF48371">
    <property type="entry name" value="ARM repeat"/>
    <property type="match status" value="1"/>
</dbReference>
<dbReference type="PROSITE" id="PS50077">
    <property type="entry name" value="HEAT_REPEAT"/>
    <property type="match status" value="1"/>
</dbReference>
<dbReference type="PROSITE" id="PS50166">
    <property type="entry name" value="IMPORTIN_B_NT"/>
    <property type="match status" value="1"/>
</dbReference>
<name>IMB1_RAT</name>
<keyword id="KW-0007">Acetylation</keyword>
<keyword id="KW-0013">ADP-ribosylation</keyword>
<keyword id="KW-0963">Cytoplasm</keyword>
<keyword id="KW-0903">Direct protein sequencing</keyword>
<keyword id="KW-0539">Nucleus</keyword>
<keyword id="KW-0597">Phosphoprotein</keyword>
<keyword id="KW-0653">Protein transport</keyword>
<keyword id="KW-1185">Reference proteome</keyword>
<keyword id="KW-0677">Repeat</keyword>
<keyword id="KW-0813">Transport</keyword>
<sequence length="875" mass="97124">MELITILEKTVSPDRLELEAAQKFLERAAVENLPTFLVELSRVLANPGNSQVARVAAGLQIRLLTSKDPDIKAQYQQRWLAIDANARREVKNYVLQTLGTETYRPSSASQCVAGIACAEIPVSQWPELIPQLVANVTNPNSTEHMKESTLEAIGYICQDIDPEQLQDKSNEILTAIIQGMRKEEPSNNVKLAATNALLNSLEFTKANFDKESERHFIMQVVCEATQCPDTRVRVAALQNLVKIMSLYYQYMETYMGPALFAITIEAMKSDIDEVALQGIEFWSNVCDEEMDLAIEASEAAEQGRPPEHTSKFYAKGALQYLVPILTQTLTKQDENDDDDDWNPCKAAGVCLMLLSTCCEDDIVPHVLPFIKEHIKNPDWRYRDAAVMAFGSILEGPEPNQLKPLVIQAMPTLIELMKDPSVVVRDTTAWTVGRICELLPEAAINDVYLAPLLQCLIEGLSAEPRVASNVCWAFSSLAEAAYEAADVADDQEEPATYCLSSSFELIVQKLLETTDRPDGHQNNLRSSAYESLMEIVKNSAKDCYPAVQKTTLVIMERLQQVLQMESHIQSTSDRIQFNDLQSLLCATLQNVLWKVQHQDALQISDVVMASLLRMFQSTAGSGGVQEDALMAVSTLVEVLGGEFLKYMEAFKPFLGIGLKNYAECQVCLAAVGLVGDLCRALQSNILPFCDEVMQLLLENLGNENVHRSVKPQILSVFGDITLAIGGEFKKYLEVVLNTLQQASQAQVDKSDFDMVDYLNELRESCLEAYTGIVQGLKGDQENVHPDVMLVQPRVEFILSFIDHIAGDEDHTDGVVACAAGLIGDLCTAFGKDVLKLVEARPMIHELLTEGRRSKTNKAKTLATWATKELRKLKNQA</sequence>
<organism>
    <name type="scientific">Rattus norvegicus</name>
    <name type="common">Rat</name>
    <dbReference type="NCBI Taxonomy" id="10116"/>
    <lineage>
        <taxon>Eukaryota</taxon>
        <taxon>Metazoa</taxon>
        <taxon>Chordata</taxon>
        <taxon>Craniata</taxon>
        <taxon>Vertebrata</taxon>
        <taxon>Euteleostomi</taxon>
        <taxon>Mammalia</taxon>
        <taxon>Eutheria</taxon>
        <taxon>Euarchontoglires</taxon>
        <taxon>Glires</taxon>
        <taxon>Rodentia</taxon>
        <taxon>Myomorpha</taxon>
        <taxon>Muroidea</taxon>
        <taxon>Muridae</taxon>
        <taxon>Murinae</taxon>
        <taxon>Rattus</taxon>
    </lineage>
</organism>
<protein>
    <recommendedName>
        <fullName>Importin subunit beta-1</fullName>
    </recommendedName>
    <alternativeName>
        <fullName>Karyopherin subunit beta-1</fullName>
    </alternativeName>
    <alternativeName>
        <fullName>Nuclear factor p97</fullName>
    </alternativeName>
    <alternativeName>
        <fullName>Pore targeting complex 97 kDa subunit</fullName>
        <shortName>PTAC97</shortName>
    </alternativeName>
</protein>